<gene>
    <name evidence="1" type="primary">rhaS</name>
    <name type="ordered locus">ECSE_4194</name>
</gene>
<accession>B6I4P8</accession>
<protein>
    <recommendedName>
        <fullName evidence="1">HTH-type transcriptional activator RhaS</fullName>
    </recommendedName>
    <alternativeName>
        <fullName evidence="1">L-rhamnose operon regulatory protein RhaS</fullName>
    </alternativeName>
</protein>
<name>RHAS_ECOSE</name>
<evidence type="ECO:0000255" key="1">
    <source>
        <dbReference type="HAMAP-Rule" id="MF_01534"/>
    </source>
</evidence>
<keyword id="KW-0010">Activator</keyword>
<keyword id="KW-0963">Cytoplasm</keyword>
<keyword id="KW-0238">DNA-binding</keyword>
<keyword id="KW-0677">Repeat</keyword>
<keyword id="KW-0684">Rhamnose metabolism</keyword>
<keyword id="KW-0804">Transcription</keyword>
<keyword id="KW-0805">Transcription regulation</keyword>
<dbReference type="EMBL" id="AP009240">
    <property type="protein sequence ID" value="BAG79718.1"/>
    <property type="molecule type" value="Genomic_DNA"/>
</dbReference>
<dbReference type="RefSeq" id="WP_000217139.1">
    <property type="nucleotide sequence ID" value="NC_011415.1"/>
</dbReference>
<dbReference type="SMR" id="B6I4P8"/>
<dbReference type="KEGG" id="ecy:ECSE_4194"/>
<dbReference type="HOGENOM" id="CLU_000445_88_5_6"/>
<dbReference type="Proteomes" id="UP000008199">
    <property type="component" value="Chromosome"/>
</dbReference>
<dbReference type="GO" id="GO:0005737">
    <property type="term" value="C:cytoplasm"/>
    <property type="evidence" value="ECO:0007669"/>
    <property type="project" value="UniProtKB-SubCell"/>
</dbReference>
<dbReference type="GO" id="GO:0003700">
    <property type="term" value="F:DNA-binding transcription factor activity"/>
    <property type="evidence" value="ECO:0007669"/>
    <property type="project" value="UniProtKB-UniRule"/>
</dbReference>
<dbReference type="GO" id="GO:0043565">
    <property type="term" value="F:sequence-specific DNA binding"/>
    <property type="evidence" value="ECO:0007669"/>
    <property type="project" value="InterPro"/>
</dbReference>
<dbReference type="GO" id="GO:0045893">
    <property type="term" value="P:positive regulation of DNA-templated transcription"/>
    <property type="evidence" value="ECO:0007669"/>
    <property type="project" value="UniProtKB-UniRule"/>
</dbReference>
<dbReference type="GO" id="GO:0019299">
    <property type="term" value="P:rhamnose metabolic process"/>
    <property type="evidence" value="ECO:0007669"/>
    <property type="project" value="UniProtKB-UniRule"/>
</dbReference>
<dbReference type="CDD" id="cd06977">
    <property type="entry name" value="cupin_RhaR_RhaS-like_N"/>
    <property type="match status" value="1"/>
</dbReference>
<dbReference type="FunFam" id="1.10.10.60:FF:000181">
    <property type="entry name" value="HTH-type transcriptional activator RhaS"/>
    <property type="match status" value="1"/>
</dbReference>
<dbReference type="FunFam" id="2.60.120.10:FF:000041">
    <property type="entry name" value="HTH-type transcriptional activator RhaS"/>
    <property type="match status" value="1"/>
</dbReference>
<dbReference type="Gene3D" id="1.10.10.60">
    <property type="entry name" value="Homeodomain-like"/>
    <property type="match status" value="1"/>
</dbReference>
<dbReference type="Gene3D" id="2.60.120.10">
    <property type="entry name" value="Jelly Rolls"/>
    <property type="match status" value="1"/>
</dbReference>
<dbReference type="HAMAP" id="MF_01534">
    <property type="entry name" value="HTH_type_RhaS"/>
    <property type="match status" value="1"/>
</dbReference>
<dbReference type="InterPro" id="IPR003313">
    <property type="entry name" value="AraC-bd"/>
</dbReference>
<dbReference type="InterPro" id="IPR050204">
    <property type="entry name" value="AraC_XylS_family_regulators"/>
</dbReference>
<dbReference type="InterPro" id="IPR009057">
    <property type="entry name" value="Homeodomain-like_sf"/>
</dbReference>
<dbReference type="InterPro" id="IPR037923">
    <property type="entry name" value="HTH-like"/>
</dbReference>
<dbReference type="InterPro" id="IPR018060">
    <property type="entry name" value="HTH_AraC"/>
</dbReference>
<dbReference type="InterPro" id="IPR018062">
    <property type="entry name" value="HTH_AraC-typ_CS"/>
</dbReference>
<dbReference type="InterPro" id="IPR047220">
    <property type="entry name" value="RhaR_RhaS-like_N"/>
</dbReference>
<dbReference type="InterPro" id="IPR014710">
    <property type="entry name" value="RmlC-like_jellyroll"/>
</dbReference>
<dbReference type="InterPro" id="IPR020449">
    <property type="entry name" value="Tscrpt_reg_AraC-type_HTH"/>
</dbReference>
<dbReference type="InterPro" id="IPR023609">
    <property type="entry name" value="Tscrpt_reg_HTH_RhaS"/>
</dbReference>
<dbReference type="NCBIfam" id="NF010028">
    <property type="entry name" value="PRK13503.1"/>
    <property type="match status" value="1"/>
</dbReference>
<dbReference type="PANTHER" id="PTHR46796:SF13">
    <property type="entry name" value="HTH-TYPE TRANSCRIPTIONAL ACTIVATOR RHAS"/>
    <property type="match status" value="1"/>
</dbReference>
<dbReference type="PANTHER" id="PTHR46796">
    <property type="entry name" value="HTH-TYPE TRANSCRIPTIONAL ACTIVATOR RHAS-RELATED"/>
    <property type="match status" value="1"/>
</dbReference>
<dbReference type="Pfam" id="PF02311">
    <property type="entry name" value="AraC_binding"/>
    <property type="match status" value="1"/>
</dbReference>
<dbReference type="Pfam" id="PF12833">
    <property type="entry name" value="HTH_18"/>
    <property type="match status" value="1"/>
</dbReference>
<dbReference type="PRINTS" id="PR00032">
    <property type="entry name" value="HTHARAC"/>
</dbReference>
<dbReference type="SMART" id="SM00342">
    <property type="entry name" value="HTH_ARAC"/>
    <property type="match status" value="1"/>
</dbReference>
<dbReference type="SUPFAM" id="SSF46689">
    <property type="entry name" value="Homeodomain-like"/>
    <property type="match status" value="2"/>
</dbReference>
<dbReference type="SUPFAM" id="SSF51215">
    <property type="entry name" value="Regulatory protein AraC"/>
    <property type="match status" value="1"/>
</dbReference>
<dbReference type="PROSITE" id="PS00041">
    <property type="entry name" value="HTH_ARAC_FAMILY_1"/>
    <property type="match status" value="1"/>
</dbReference>
<dbReference type="PROSITE" id="PS01124">
    <property type="entry name" value="HTH_ARAC_FAMILY_2"/>
    <property type="match status" value="1"/>
</dbReference>
<reference key="1">
    <citation type="journal article" date="2008" name="DNA Res.">
        <title>Complete genome sequence and comparative analysis of the wild-type commensal Escherichia coli strain SE11 isolated from a healthy adult.</title>
        <authorList>
            <person name="Oshima K."/>
            <person name="Toh H."/>
            <person name="Ogura Y."/>
            <person name="Sasamoto H."/>
            <person name="Morita H."/>
            <person name="Park S.-H."/>
            <person name="Ooka T."/>
            <person name="Iyoda S."/>
            <person name="Taylor T.D."/>
            <person name="Hayashi T."/>
            <person name="Itoh K."/>
            <person name="Hattori M."/>
        </authorList>
    </citation>
    <scope>NUCLEOTIDE SEQUENCE [LARGE SCALE GENOMIC DNA]</scope>
    <source>
        <strain>SE11</strain>
    </source>
</reference>
<comment type="function">
    <text evidence="1">Activates expression of the rhaBAD and rhaT operons.</text>
</comment>
<comment type="subunit">
    <text evidence="1">Binds DNA as a dimer.</text>
</comment>
<comment type="subcellular location">
    <subcellularLocation>
        <location evidence="1">Cytoplasm</location>
    </subcellularLocation>
</comment>
<proteinExistence type="inferred from homology"/>
<sequence>MTVLHSVDFFPSGNASVAIEPRLPQADFPEHHHDFHEIVIVEHGTGIHVFNGQPYTITGGTVCFVRDHDRHLYEHTDNLCLTNVLYRSPDRFQFLAGLNQLLPQELDGQYPSHWRVNHSVLQQVRQLVAQMEQQEGENDLPSTASREILFMQLLLLLRKSSLQENLENSASRLNLLLAWLEDHFADEVNWDAVAEQFSLSLRTLHRQLKQQTGLTPQRYLNRLRLMKARHLLRHSEASVTDIAYRCGFSDSNHFSTLFRREFNWSPRDIRQGRDGFLQ</sequence>
<organism>
    <name type="scientific">Escherichia coli (strain SE11)</name>
    <dbReference type="NCBI Taxonomy" id="409438"/>
    <lineage>
        <taxon>Bacteria</taxon>
        <taxon>Pseudomonadati</taxon>
        <taxon>Pseudomonadota</taxon>
        <taxon>Gammaproteobacteria</taxon>
        <taxon>Enterobacterales</taxon>
        <taxon>Enterobacteriaceae</taxon>
        <taxon>Escherichia</taxon>
    </lineage>
</organism>
<feature type="chain" id="PRO_1000200949" description="HTH-type transcriptional activator RhaS">
    <location>
        <begin position="1"/>
        <end position="278"/>
    </location>
</feature>
<feature type="domain" description="HTH araC/xylS-type" evidence="1">
    <location>
        <begin position="174"/>
        <end position="272"/>
    </location>
</feature>
<feature type="DNA-binding region" description="H-T-H motif" evidence="1">
    <location>
        <begin position="191"/>
        <end position="212"/>
    </location>
</feature>
<feature type="DNA-binding region" description="H-T-H motif" evidence="1">
    <location>
        <begin position="239"/>
        <end position="262"/>
    </location>
</feature>
<feature type="site" description="Interaction with sigma-70" evidence="1">
    <location>
        <position position="241"/>
    </location>
</feature>
<feature type="site" description="Interaction with sigma-70" evidence="1">
    <location>
        <position position="250"/>
    </location>
</feature>